<proteinExistence type="evidence at protein level"/>
<protein>
    <recommendedName>
        <fullName>Glycophorin-A</fullName>
    </recommendedName>
    <alternativeName>
        <fullName>Glycophorin-HA</fullName>
    </alternativeName>
    <cdAntigenName>CD235a</cdAntigenName>
</protein>
<name>GLPA_HORSE</name>
<comment type="function">
    <text evidence="1">Glycophorin A is the major intrinsic membrane sialoglycoprotein of the erythrocyte. Appears to be important for the function of SLC4A1 and is required for high activity of SLC4A1. May be involved in translocation of SLC4A1 to the plasma membrane (By similarity).</text>
</comment>
<comment type="subunit">
    <text evidence="1">Homodimer.</text>
</comment>
<comment type="subcellular location">
    <subcellularLocation>
        <location>Membrane</location>
        <topology>Single-pass type I membrane protein</topology>
    </subcellularLocation>
</comment>
<comment type="similarity">
    <text evidence="6">Belongs to the glycophorin-A family.</text>
</comment>
<organism>
    <name type="scientific">Equus caballus</name>
    <name type="common">Horse</name>
    <dbReference type="NCBI Taxonomy" id="9796"/>
    <lineage>
        <taxon>Eukaryota</taxon>
        <taxon>Metazoa</taxon>
        <taxon>Chordata</taxon>
        <taxon>Craniata</taxon>
        <taxon>Vertebrata</taxon>
        <taxon>Euteleostomi</taxon>
        <taxon>Mammalia</taxon>
        <taxon>Eutheria</taxon>
        <taxon>Laurasiatheria</taxon>
        <taxon>Perissodactyla</taxon>
        <taxon>Equidae</taxon>
        <taxon>Equus</taxon>
    </lineage>
</organism>
<accession>P02726</accession>
<keyword id="KW-0903">Direct protein sequencing</keyword>
<keyword id="KW-0325">Glycoprotein</keyword>
<keyword id="KW-0472">Membrane</keyword>
<keyword id="KW-0597">Phosphoprotein</keyword>
<keyword id="KW-0873">Pyrrolidone carboxylic acid</keyword>
<keyword id="KW-1185">Reference proteome</keyword>
<keyword id="KW-0730">Sialic acid</keyword>
<keyword id="KW-0812">Transmembrane</keyword>
<keyword id="KW-1133">Transmembrane helix</keyword>
<evidence type="ECO:0000250" key="1"/>
<evidence type="ECO:0000250" key="2">
    <source>
        <dbReference type="UniProtKB" id="P02724"/>
    </source>
</evidence>
<evidence type="ECO:0000255" key="3"/>
<evidence type="ECO:0000256" key="4">
    <source>
        <dbReference type="SAM" id="MobiDB-lite"/>
    </source>
</evidence>
<evidence type="ECO:0000269" key="5">
    <source>
    </source>
</evidence>
<evidence type="ECO:0000305" key="6"/>
<reference key="1">
    <citation type="journal article" date="1982" name="J. Membr. Biol.">
        <title>Primary structure of horse erythrocyte glycophorin HA. Its amino acid sequence has a unique homology with those of human and porcine erythrocyte glycophorins.</title>
        <authorList>
            <person name="Murayama J."/>
            <person name="Tomita M."/>
            <person name="Hamada A."/>
        </authorList>
    </citation>
    <scope>PROTEIN SEQUENCE</scope>
    <scope>PYROGLUTAMATE FORMATION AT GLN-1</scope>
</reference>
<feature type="chain" id="PRO_0000149046" description="Glycophorin-A">
    <location>
        <begin position="1"/>
        <end position="120"/>
    </location>
</feature>
<feature type="transmembrane region" description="Helical" evidence="3">
    <location>
        <begin position="50"/>
        <end position="72"/>
    </location>
</feature>
<feature type="region of interest" description="Disordered" evidence="4">
    <location>
        <begin position="1"/>
        <end position="40"/>
    </location>
</feature>
<feature type="region of interest" description="Disordered" evidence="4">
    <location>
        <begin position="78"/>
        <end position="120"/>
    </location>
</feature>
<feature type="compositionally biased region" description="Low complexity" evidence="4">
    <location>
        <begin position="17"/>
        <end position="29"/>
    </location>
</feature>
<feature type="compositionally biased region" description="Pro residues" evidence="4">
    <location>
        <begin position="82"/>
        <end position="100"/>
    </location>
</feature>
<feature type="compositionally biased region" description="Polar residues" evidence="4">
    <location>
        <begin position="107"/>
        <end position="120"/>
    </location>
</feature>
<feature type="modified residue" description="Pyrrolidone carboxylic acid" evidence="5">
    <location>
        <position position="1"/>
    </location>
</feature>
<feature type="modified residue" description="Phosphoserine" evidence="2">
    <location>
        <position position="119"/>
    </location>
</feature>
<feature type="glycosylation site" description="O-linked (GalNAc...) threonine" evidence="5">
    <location>
        <position position="2"/>
    </location>
</feature>
<feature type="glycosylation site" description="O-linked (GalNAc...) threonine" evidence="5">
    <location>
        <position position="5"/>
    </location>
</feature>
<feature type="glycosylation site" description="O-linked (GalNAc...) serine" evidence="5">
    <location>
        <position position="7"/>
    </location>
</feature>
<feature type="glycosylation site" description="O-linked (GalNAc...) threonine" evidence="5">
    <location>
        <position position="13"/>
    </location>
</feature>
<feature type="glycosylation site" description="O-linked (GalNAc...) serine" evidence="5">
    <location>
        <position position="17"/>
    </location>
</feature>
<feature type="glycosylation site" description="O-linked (GalNAc...) threonine" evidence="5">
    <location>
        <position position="18"/>
    </location>
</feature>
<feature type="glycosylation site" description="O-linked (GalNAc...) threonine" evidence="5">
    <location>
        <position position="20"/>
    </location>
</feature>
<feature type="glycosylation site" description="O-linked (GalNAc...) serine" evidence="5">
    <location>
        <position position="21"/>
    </location>
</feature>
<feature type="glycosylation site" description="O-linked (GalNAc...) threonine" evidence="5">
    <location>
        <position position="24"/>
    </location>
</feature>
<feature type="glycosylation site" description="O-linked (GalNAc...) threonine" evidence="5">
    <location>
        <position position="28"/>
    </location>
</feature>
<dbReference type="PIR" id="A03185">
    <property type="entry name" value="GFHOE"/>
</dbReference>
<dbReference type="SMR" id="P02726"/>
<dbReference type="FunCoup" id="P02726">
    <property type="interactions" value="76"/>
</dbReference>
<dbReference type="STRING" id="9796.ENSECAP00000021991"/>
<dbReference type="GlyConnect" id="180">
    <property type="glycosylation" value="5 O-Linked glycans"/>
</dbReference>
<dbReference type="iPTMnet" id="P02726"/>
<dbReference type="InParanoid" id="P02726"/>
<dbReference type="Proteomes" id="UP000002281">
    <property type="component" value="Unplaced"/>
</dbReference>
<dbReference type="GO" id="GO:0005886">
    <property type="term" value="C:plasma membrane"/>
    <property type="evidence" value="ECO:0000318"/>
    <property type="project" value="GO_Central"/>
</dbReference>
<dbReference type="Gene3D" id="1.20.5.70">
    <property type="match status" value="1"/>
</dbReference>
<dbReference type="InterPro" id="IPR001195">
    <property type="entry name" value="Glycophorin"/>
</dbReference>
<dbReference type="InterPro" id="IPR018938">
    <property type="entry name" value="Glycophorin_CS"/>
</dbReference>
<dbReference type="InterPro" id="IPR049535">
    <property type="entry name" value="GYPA_B"/>
</dbReference>
<dbReference type="PANTHER" id="PTHR13813">
    <property type="entry name" value="GLYCOPHORIN"/>
    <property type="match status" value="1"/>
</dbReference>
<dbReference type="PANTHER" id="PTHR13813:SF3">
    <property type="entry name" value="GLYCOPHORIN-A"/>
    <property type="match status" value="1"/>
</dbReference>
<dbReference type="Pfam" id="PF01102">
    <property type="entry name" value="Glycophorin_A"/>
    <property type="match status" value="1"/>
</dbReference>
<dbReference type="PROSITE" id="PS00312">
    <property type="entry name" value="GLYCOPHORIN_A"/>
    <property type="match status" value="1"/>
</dbReference>
<sequence>QTIATGSPPIAGTSDLSTITSAATPTFTTEQDGREQGDGLQLAHDFSQPVITVIILGVMAGIIGIILLLAYVSRRLRKRPPADVPPPASTVPSADAPPPVSEDDETSLTSVETDYPGDSQ</sequence>